<protein>
    <recommendedName>
        <fullName evidence="1">6,7-dimethyl-8-ribityllumazine synthase</fullName>
        <shortName evidence="1">DMRL synthase</shortName>
        <shortName evidence="1">LS</shortName>
        <shortName evidence="1">Lumazine synthase</shortName>
        <ecNumber evidence="1">2.5.1.78</ecNumber>
    </recommendedName>
</protein>
<sequence>MTIIEGNLRTENAKYGIVVAQFNEFINAKLLSGALDALKRHGVQEEEIDIAWVPGAFEIPIIAQKMATSNKYEAIICLGTVIRGSTSHYDFVCNEVSKGIAHVSLNSNIPVMFGVLTTENIEQAIERAGTKAGNKGFEVAVGAIEMVDLMRKIG</sequence>
<keyword id="KW-1185">Reference proteome</keyword>
<keyword id="KW-0686">Riboflavin biosynthesis</keyword>
<keyword id="KW-0808">Transferase</keyword>
<dbReference type="EC" id="2.5.1.78" evidence="1"/>
<dbReference type="EMBL" id="AE005176">
    <property type="protein sequence ID" value="AAK05094.1"/>
    <property type="molecule type" value="Genomic_DNA"/>
</dbReference>
<dbReference type="PIR" id="D86749">
    <property type="entry name" value="D86749"/>
</dbReference>
<dbReference type="RefSeq" id="NP_267152.1">
    <property type="nucleotide sequence ID" value="NC_002662.1"/>
</dbReference>
<dbReference type="SMR" id="Q9CGU6"/>
<dbReference type="PaxDb" id="272623-L0166"/>
<dbReference type="EnsemblBacteria" id="AAK05094">
    <property type="protein sequence ID" value="AAK05094"/>
    <property type="gene ID" value="L0166"/>
</dbReference>
<dbReference type="KEGG" id="lla:L0166"/>
<dbReference type="PATRIC" id="fig|272623.7.peg.1065"/>
<dbReference type="eggNOG" id="COG0054">
    <property type="taxonomic scope" value="Bacteria"/>
</dbReference>
<dbReference type="HOGENOM" id="CLU_089358_1_1_9"/>
<dbReference type="OrthoDB" id="9809709at2"/>
<dbReference type="BRENDA" id="2.5.1.78">
    <property type="organism ID" value="2864"/>
</dbReference>
<dbReference type="UniPathway" id="UPA00275">
    <property type="reaction ID" value="UER00404"/>
</dbReference>
<dbReference type="Proteomes" id="UP000002196">
    <property type="component" value="Chromosome"/>
</dbReference>
<dbReference type="GO" id="GO:0005829">
    <property type="term" value="C:cytosol"/>
    <property type="evidence" value="ECO:0007669"/>
    <property type="project" value="TreeGrafter"/>
</dbReference>
<dbReference type="GO" id="GO:0009349">
    <property type="term" value="C:riboflavin synthase complex"/>
    <property type="evidence" value="ECO:0007669"/>
    <property type="project" value="InterPro"/>
</dbReference>
<dbReference type="GO" id="GO:0000906">
    <property type="term" value="F:6,7-dimethyl-8-ribityllumazine synthase activity"/>
    <property type="evidence" value="ECO:0007669"/>
    <property type="project" value="UniProtKB-UniRule"/>
</dbReference>
<dbReference type="GO" id="GO:0009231">
    <property type="term" value="P:riboflavin biosynthetic process"/>
    <property type="evidence" value="ECO:0007669"/>
    <property type="project" value="UniProtKB-UniRule"/>
</dbReference>
<dbReference type="CDD" id="cd09209">
    <property type="entry name" value="Lumazine_synthase-I"/>
    <property type="match status" value="1"/>
</dbReference>
<dbReference type="FunFam" id="3.40.50.960:FF:000001">
    <property type="entry name" value="6,7-dimethyl-8-ribityllumazine synthase"/>
    <property type="match status" value="1"/>
</dbReference>
<dbReference type="Gene3D" id="3.40.50.960">
    <property type="entry name" value="Lumazine/riboflavin synthase"/>
    <property type="match status" value="1"/>
</dbReference>
<dbReference type="HAMAP" id="MF_00178">
    <property type="entry name" value="Lumazine_synth"/>
    <property type="match status" value="1"/>
</dbReference>
<dbReference type="InterPro" id="IPR034964">
    <property type="entry name" value="LS"/>
</dbReference>
<dbReference type="InterPro" id="IPR002180">
    <property type="entry name" value="LS/RS"/>
</dbReference>
<dbReference type="InterPro" id="IPR036467">
    <property type="entry name" value="LS/RS_sf"/>
</dbReference>
<dbReference type="NCBIfam" id="TIGR00114">
    <property type="entry name" value="lumazine-synth"/>
    <property type="match status" value="1"/>
</dbReference>
<dbReference type="NCBIfam" id="NF000812">
    <property type="entry name" value="PRK00061.1-4"/>
    <property type="match status" value="1"/>
</dbReference>
<dbReference type="PANTHER" id="PTHR21058:SF0">
    <property type="entry name" value="6,7-DIMETHYL-8-RIBITYLLUMAZINE SYNTHASE"/>
    <property type="match status" value="1"/>
</dbReference>
<dbReference type="PANTHER" id="PTHR21058">
    <property type="entry name" value="6,7-DIMETHYL-8-RIBITYLLUMAZINE SYNTHASE DMRL SYNTHASE LUMAZINE SYNTHASE"/>
    <property type="match status" value="1"/>
</dbReference>
<dbReference type="Pfam" id="PF00885">
    <property type="entry name" value="DMRL_synthase"/>
    <property type="match status" value="1"/>
</dbReference>
<dbReference type="SUPFAM" id="SSF52121">
    <property type="entry name" value="Lumazine synthase"/>
    <property type="match status" value="1"/>
</dbReference>
<feature type="chain" id="PRO_0000134765" description="6,7-dimethyl-8-ribityllumazine synthase">
    <location>
        <begin position="1"/>
        <end position="154"/>
    </location>
</feature>
<feature type="active site" description="Proton donor" evidence="1">
    <location>
        <position position="88"/>
    </location>
</feature>
<feature type="binding site" evidence="1">
    <location>
        <position position="22"/>
    </location>
    <ligand>
        <name>5-amino-6-(D-ribitylamino)uracil</name>
        <dbReference type="ChEBI" id="CHEBI:15934"/>
    </ligand>
</feature>
<feature type="binding site" evidence="1">
    <location>
        <begin position="56"/>
        <end position="58"/>
    </location>
    <ligand>
        <name>5-amino-6-(D-ribitylamino)uracil</name>
        <dbReference type="ChEBI" id="CHEBI:15934"/>
    </ligand>
</feature>
<feature type="binding site" evidence="1">
    <location>
        <begin position="80"/>
        <end position="82"/>
    </location>
    <ligand>
        <name>5-amino-6-(D-ribitylamino)uracil</name>
        <dbReference type="ChEBI" id="CHEBI:15934"/>
    </ligand>
</feature>
<feature type="binding site" evidence="1">
    <location>
        <begin position="85"/>
        <end position="86"/>
    </location>
    <ligand>
        <name>(2S)-2-hydroxy-3-oxobutyl phosphate</name>
        <dbReference type="ChEBI" id="CHEBI:58830"/>
    </ligand>
</feature>
<feature type="binding site" evidence="1">
    <location>
        <position position="113"/>
    </location>
    <ligand>
        <name>5-amino-6-(D-ribitylamino)uracil</name>
        <dbReference type="ChEBI" id="CHEBI:15934"/>
    </ligand>
</feature>
<feature type="binding site" evidence="1">
    <location>
        <position position="127"/>
    </location>
    <ligand>
        <name>(2S)-2-hydroxy-3-oxobutyl phosphate</name>
        <dbReference type="ChEBI" id="CHEBI:58830"/>
    </ligand>
</feature>
<proteinExistence type="inferred from homology"/>
<reference key="1">
    <citation type="journal article" date="2001" name="Genome Res.">
        <title>The complete genome sequence of the lactic acid bacterium Lactococcus lactis ssp. lactis IL1403.</title>
        <authorList>
            <person name="Bolotin A."/>
            <person name="Wincker P."/>
            <person name="Mauger S."/>
            <person name="Jaillon O."/>
            <person name="Malarme K."/>
            <person name="Weissenbach J."/>
            <person name="Ehrlich S.D."/>
            <person name="Sorokin A."/>
        </authorList>
    </citation>
    <scope>NUCLEOTIDE SEQUENCE [LARGE SCALE GENOMIC DNA]</scope>
    <source>
        <strain>IL1403</strain>
    </source>
</reference>
<organism>
    <name type="scientific">Lactococcus lactis subsp. lactis (strain IL1403)</name>
    <name type="common">Streptococcus lactis</name>
    <dbReference type="NCBI Taxonomy" id="272623"/>
    <lineage>
        <taxon>Bacteria</taxon>
        <taxon>Bacillati</taxon>
        <taxon>Bacillota</taxon>
        <taxon>Bacilli</taxon>
        <taxon>Lactobacillales</taxon>
        <taxon>Streptococcaceae</taxon>
        <taxon>Lactococcus</taxon>
    </lineage>
</organism>
<gene>
    <name evidence="1" type="primary">ribH</name>
    <name type="ordered locus">LL0996</name>
    <name type="ORF">L0166</name>
</gene>
<comment type="function">
    <text evidence="1">Catalyzes the formation of 6,7-dimethyl-8-ribityllumazine by condensation of 5-amino-6-(D-ribitylamino)uracil with 3,4-dihydroxy-2-butanone 4-phosphate. This is the penultimate step in the biosynthesis of riboflavin.</text>
</comment>
<comment type="catalytic activity">
    <reaction evidence="1">
        <text>(2S)-2-hydroxy-3-oxobutyl phosphate + 5-amino-6-(D-ribitylamino)uracil = 6,7-dimethyl-8-(1-D-ribityl)lumazine + phosphate + 2 H2O + H(+)</text>
        <dbReference type="Rhea" id="RHEA:26152"/>
        <dbReference type="ChEBI" id="CHEBI:15377"/>
        <dbReference type="ChEBI" id="CHEBI:15378"/>
        <dbReference type="ChEBI" id="CHEBI:15934"/>
        <dbReference type="ChEBI" id="CHEBI:43474"/>
        <dbReference type="ChEBI" id="CHEBI:58201"/>
        <dbReference type="ChEBI" id="CHEBI:58830"/>
        <dbReference type="EC" id="2.5.1.78"/>
    </reaction>
</comment>
<comment type="pathway">
    <text evidence="1">Cofactor biosynthesis; riboflavin biosynthesis; riboflavin from 2-hydroxy-3-oxobutyl phosphate and 5-amino-6-(D-ribitylamino)uracil: step 1/2.</text>
</comment>
<comment type="similarity">
    <text evidence="1">Belongs to the DMRL synthase family.</text>
</comment>
<evidence type="ECO:0000255" key="1">
    <source>
        <dbReference type="HAMAP-Rule" id="MF_00178"/>
    </source>
</evidence>
<accession>Q9CGU6</accession>
<name>RISB_LACLA</name>